<protein>
    <recommendedName>
        <fullName evidence="2">Glutathione biosynthesis bifunctional protein GshAB</fullName>
    </recommendedName>
    <alternativeName>
        <fullName evidence="2">Gamma-GCS-GS</fullName>
        <shortName evidence="2">GCS-GS</shortName>
    </alternativeName>
    <domain>
        <recommendedName>
            <fullName evidence="2">Glutamate--cysteine ligase</fullName>
            <ecNumber evidence="2">6.3.2.2</ecNumber>
        </recommendedName>
        <alternativeName>
            <fullName evidence="2">Gamma-ECS</fullName>
            <shortName evidence="2">GCS</shortName>
        </alternativeName>
        <alternativeName>
            <fullName evidence="2">Gamma-glutamylcysteine synthetase</fullName>
        </alternativeName>
    </domain>
    <domain>
        <recommendedName>
            <fullName evidence="2">Glutathione synthetase</fullName>
            <ecNumber evidence="2">6.3.2.3</ecNumber>
        </recommendedName>
        <alternativeName>
            <fullName evidence="2">GSH synthetase</fullName>
            <shortName evidence="2">GS</shortName>
            <shortName evidence="2">GSH-S</shortName>
            <shortName evidence="2">GSHase</shortName>
        </alternativeName>
        <alternativeName>
            <fullName evidence="2">Glutathione synthase</fullName>
        </alternativeName>
    </domain>
</protein>
<evidence type="ECO:0000250" key="1"/>
<evidence type="ECO:0000255" key="2">
    <source>
        <dbReference type="HAMAP-Rule" id="MF_00782"/>
    </source>
</evidence>
<evidence type="ECO:0000256" key="3">
    <source>
        <dbReference type="SAM" id="MobiDB-lite"/>
    </source>
</evidence>
<evidence type="ECO:0000305" key="4"/>
<evidence type="ECO:0007829" key="5">
    <source>
        <dbReference type="PDB" id="3LN6"/>
    </source>
</evidence>
<name>GSHAB_STRA5</name>
<proteinExistence type="evidence at protein level"/>
<dbReference type="EC" id="6.3.2.2" evidence="2"/>
<dbReference type="EC" id="6.3.2.3" evidence="2"/>
<dbReference type="EMBL" id="AE009948">
    <property type="protein sequence ID" value="AAN00684.1"/>
    <property type="molecule type" value="Genomic_DNA"/>
</dbReference>
<dbReference type="RefSeq" id="NP_688811.1">
    <property type="nucleotide sequence ID" value="NC_004116.1"/>
</dbReference>
<dbReference type="RefSeq" id="WP_000582678.1">
    <property type="nucleotide sequence ID" value="NC_004116.1"/>
</dbReference>
<dbReference type="PDB" id="3LN6">
    <property type="method" value="X-ray"/>
    <property type="resolution" value="2.95 A"/>
    <property type="chains" value="A=1-750"/>
</dbReference>
<dbReference type="PDBsum" id="3LN6"/>
<dbReference type="SMR" id="Q8DXM9"/>
<dbReference type="STRING" id="208435.SAG1821"/>
<dbReference type="KEGG" id="sag:SAG1821"/>
<dbReference type="PATRIC" id="fig|208435.3.peg.1829"/>
<dbReference type="HOGENOM" id="CLU_020728_1_0_9"/>
<dbReference type="OrthoDB" id="9803907at2"/>
<dbReference type="BRENDA" id="6.3.2.2">
    <property type="organism ID" value="15082"/>
</dbReference>
<dbReference type="BRENDA" id="6.3.2.3">
    <property type="organism ID" value="5917"/>
</dbReference>
<dbReference type="SABIO-RK" id="Q8DXM9"/>
<dbReference type="UniPathway" id="UPA00142">
    <property type="reaction ID" value="UER00209"/>
</dbReference>
<dbReference type="UniPathway" id="UPA00142">
    <property type="reaction ID" value="UER00210"/>
</dbReference>
<dbReference type="EvolutionaryTrace" id="Q8DXM9"/>
<dbReference type="PHI-base" id="PHI:11484"/>
<dbReference type="Proteomes" id="UP000000821">
    <property type="component" value="Chromosome"/>
</dbReference>
<dbReference type="GO" id="GO:0005829">
    <property type="term" value="C:cytosol"/>
    <property type="evidence" value="ECO:0007669"/>
    <property type="project" value="TreeGrafter"/>
</dbReference>
<dbReference type="GO" id="GO:0005524">
    <property type="term" value="F:ATP binding"/>
    <property type="evidence" value="ECO:0007669"/>
    <property type="project" value="UniProtKB-UniRule"/>
</dbReference>
<dbReference type="GO" id="GO:0004357">
    <property type="term" value="F:glutamate-cysteine ligase activity"/>
    <property type="evidence" value="ECO:0007669"/>
    <property type="project" value="UniProtKB-UniRule"/>
</dbReference>
<dbReference type="GO" id="GO:0004363">
    <property type="term" value="F:glutathione synthase activity"/>
    <property type="evidence" value="ECO:0007669"/>
    <property type="project" value="UniProtKB-UniRule"/>
</dbReference>
<dbReference type="GO" id="GO:0046872">
    <property type="term" value="F:metal ion binding"/>
    <property type="evidence" value="ECO:0007669"/>
    <property type="project" value="UniProtKB-KW"/>
</dbReference>
<dbReference type="Gene3D" id="3.30.590.20">
    <property type="match status" value="1"/>
</dbReference>
<dbReference type="Gene3D" id="3.30.470.20">
    <property type="entry name" value="ATP-grasp fold, B domain"/>
    <property type="match status" value="2"/>
</dbReference>
<dbReference type="HAMAP" id="MF_00782">
    <property type="entry name" value="Glut_biosynth"/>
    <property type="match status" value="1"/>
</dbReference>
<dbReference type="InterPro" id="IPR011761">
    <property type="entry name" value="ATP-grasp"/>
</dbReference>
<dbReference type="InterPro" id="IPR014746">
    <property type="entry name" value="Gln_synth/guanido_kin_cat_dom"/>
</dbReference>
<dbReference type="InterPro" id="IPR007370">
    <property type="entry name" value="Glu_cys_ligase"/>
</dbReference>
<dbReference type="InterPro" id="IPR006335">
    <property type="entry name" value="Glut_biosynth"/>
</dbReference>
<dbReference type="InterPro" id="IPR006334">
    <property type="entry name" value="Glut_cys_ligase"/>
</dbReference>
<dbReference type="InterPro" id="IPR040657">
    <property type="entry name" value="GshAB_ATP-grasp"/>
</dbReference>
<dbReference type="InterPro" id="IPR020561">
    <property type="entry name" value="PRibGlycinamid_synth_ATP-grasp"/>
</dbReference>
<dbReference type="NCBIfam" id="TIGR01435">
    <property type="entry name" value="glu_cys_lig_rel"/>
    <property type="match status" value="1"/>
</dbReference>
<dbReference type="NCBIfam" id="NF002688">
    <property type="entry name" value="PRK02471.1"/>
    <property type="match status" value="1"/>
</dbReference>
<dbReference type="PANTHER" id="PTHR38761">
    <property type="entry name" value="GLUTAMATE--CYSTEINE LIGASE"/>
    <property type="match status" value="1"/>
</dbReference>
<dbReference type="PANTHER" id="PTHR38761:SF1">
    <property type="entry name" value="GLUTAMATE--CYSTEINE LIGASE"/>
    <property type="match status" value="1"/>
</dbReference>
<dbReference type="Pfam" id="PF18419">
    <property type="entry name" value="ATP-grasp_6"/>
    <property type="match status" value="1"/>
</dbReference>
<dbReference type="Pfam" id="PF01071">
    <property type="entry name" value="GARS_A"/>
    <property type="match status" value="1"/>
</dbReference>
<dbReference type="Pfam" id="PF04262">
    <property type="entry name" value="Glu_cys_ligase"/>
    <property type="match status" value="1"/>
</dbReference>
<dbReference type="SUPFAM" id="SSF55931">
    <property type="entry name" value="Glutamine synthetase/guanido kinase"/>
    <property type="match status" value="1"/>
</dbReference>
<dbReference type="SUPFAM" id="SSF56059">
    <property type="entry name" value="Glutathione synthetase ATP-binding domain-like"/>
    <property type="match status" value="1"/>
</dbReference>
<dbReference type="PROSITE" id="PS50975">
    <property type="entry name" value="ATP_GRASP"/>
    <property type="match status" value="1"/>
</dbReference>
<feature type="chain" id="PRO_0000192559" description="Glutathione biosynthesis bifunctional protein GshAB">
    <location>
        <begin position="1"/>
        <end position="750"/>
    </location>
</feature>
<feature type="domain" description="ATP-grasp" evidence="2">
    <location>
        <begin position="489"/>
        <end position="747"/>
    </location>
</feature>
<feature type="region of interest" description="Glutamate--cysteine ligase">
    <location>
        <begin position="1"/>
        <end position="333"/>
    </location>
</feature>
<feature type="region of interest" description="Disordered" evidence="3">
    <location>
        <begin position="32"/>
        <end position="51"/>
    </location>
</feature>
<feature type="binding site" evidence="2">
    <location>
        <begin position="516"/>
        <end position="574"/>
    </location>
    <ligand>
        <name>ATP</name>
        <dbReference type="ChEBI" id="CHEBI:30616"/>
    </ligand>
</feature>
<feature type="binding site" evidence="2">
    <location>
        <position position="696"/>
    </location>
    <ligand>
        <name>Mg(2+)</name>
        <dbReference type="ChEBI" id="CHEBI:18420"/>
        <label>1</label>
    </ligand>
</feature>
<feature type="binding site" evidence="2">
    <location>
        <position position="696"/>
    </location>
    <ligand>
        <name>Mn(2+)</name>
        <dbReference type="ChEBI" id="CHEBI:29035"/>
        <label>1</label>
    </ligand>
</feature>
<feature type="binding site" evidence="2">
    <location>
        <position position="717"/>
    </location>
    <ligand>
        <name>Mg(2+)</name>
        <dbReference type="ChEBI" id="CHEBI:18420"/>
        <label>1</label>
    </ligand>
</feature>
<feature type="binding site" evidence="2">
    <location>
        <position position="717"/>
    </location>
    <ligand>
        <name>Mg(2+)</name>
        <dbReference type="ChEBI" id="CHEBI:18420"/>
        <label>2</label>
    </ligand>
</feature>
<feature type="binding site" evidence="2">
    <location>
        <position position="717"/>
    </location>
    <ligand>
        <name>Mn(2+)</name>
        <dbReference type="ChEBI" id="CHEBI:29035"/>
        <label>1</label>
    </ligand>
</feature>
<feature type="binding site" evidence="2">
    <location>
        <position position="717"/>
    </location>
    <ligand>
        <name>Mn(2+)</name>
        <dbReference type="ChEBI" id="CHEBI:29035"/>
        <label>2</label>
    </ligand>
</feature>
<feature type="binding site" evidence="2">
    <location>
        <position position="719"/>
    </location>
    <ligand>
        <name>Mg(2+)</name>
        <dbReference type="ChEBI" id="CHEBI:18420"/>
        <label>2</label>
    </ligand>
</feature>
<feature type="binding site" evidence="2">
    <location>
        <position position="719"/>
    </location>
    <ligand>
        <name>Mn(2+)</name>
        <dbReference type="ChEBI" id="CHEBI:29035"/>
        <label>2</label>
    </ligand>
</feature>
<feature type="helix" evidence="5">
    <location>
        <begin position="7"/>
        <end position="9"/>
    </location>
</feature>
<feature type="strand" evidence="5">
    <location>
        <begin position="19"/>
        <end position="31"/>
    </location>
</feature>
<feature type="turn" evidence="5">
    <location>
        <begin position="32"/>
        <end position="35"/>
    </location>
</feature>
<feature type="strand" evidence="5">
    <location>
        <begin position="44"/>
        <end position="46"/>
    </location>
</feature>
<feature type="turn" evidence="5">
    <location>
        <begin position="49"/>
        <end position="51"/>
    </location>
</feature>
<feature type="strand" evidence="5">
    <location>
        <begin position="53"/>
        <end position="67"/>
    </location>
</feature>
<feature type="strand" evidence="5">
    <location>
        <begin position="71"/>
        <end position="73"/>
    </location>
</feature>
<feature type="helix" evidence="5">
    <location>
        <begin position="74"/>
        <end position="91"/>
    </location>
</feature>
<feature type="strand" evidence="5">
    <location>
        <begin position="96"/>
        <end position="98"/>
    </location>
</feature>
<feature type="strand" evidence="5">
    <location>
        <begin position="101"/>
        <end position="103"/>
    </location>
</feature>
<feature type="turn" evidence="5">
    <location>
        <begin position="109"/>
        <end position="111"/>
    </location>
</feature>
<feature type="helix" evidence="5">
    <location>
        <begin position="120"/>
        <end position="133"/>
    </location>
</feature>
<feature type="helix" evidence="5">
    <location>
        <begin position="136"/>
        <end position="139"/>
    </location>
</feature>
<feature type="strand" evidence="5">
    <location>
        <begin position="143"/>
        <end position="149"/>
    </location>
</feature>
<feature type="helix" evidence="5">
    <location>
        <begin position="151"/>
        <end position="161"/>
    </location>
</feature>
<feature type="helix" evidence="5">
    <location>
        <begin position="166"/>
        <end position="191"/>
    </location>
</feature>
<feature type="strand" evidence="5">
    <location>
        <begin position="199"/>
        <end position="201"/>
    </location>
</feature>
<feature type="turn" evidence="5">
    <location>
        <begin position="206"/>
        <end position="208"/>
    </location>
</feature>
<feature type="strand" evidence="5">
    <location>
        <begin position="212"/>
        <end position="214"/>
    </location>
</feature>
<feature type="strand" evidence="5">
    <location>
        <begin position="217"/>
        <end position="221"/>
    </location>
</feature>
<feature type="helix" evidence="5">
    <location>
        <begin position="234"/>
        <end position="243"/>
    </location>
</feature>
<feature type="turn" evidence="5">
    <location>
        <begin position="246"/>
        <end position="248"/>
    </location>
</feature>
<feature type="helix" evidence="5">
    <location>
        <begin position="253"/>
        <end position="255"/>
    </location>
</feature>
<feature type="strand" evidence="5">
    <location>
        <begin position="259"/>
        <end position="264"/>
    </location>
</feature>
<feature type="turn" evidence="5">
    <location>
        <begin position="268"/>
        <end position="274"/>
    </location>
</feature>
<feature type="strand" evidence="5">
    <location>
        <begin position="278"/>
        <end position="281"/>
    </location>
</feature>
<feature type="helix" evidence="5">
    <location>
        <begin position="296"/>
        <end position="311"/>
    </location>
</feature>
<feature type="helix" evidence="5">
    <location>
        <begin position="318"/>
        <end position="334"/>
    </location>
</feature>
<feature type="helix" evidence="5">
    <location>
        <begin position="347"/>
        <end position="361"/>
    </location>
</feature>
<feature type="helix" evidence="5">
    <location>
        <begin position="365"/>
        <end position="379"/>
    </location>
</feature>
<feature type="helix" evidence="5">
    <location>
        <begin position="381"/>
        <end position="383"/>
    </location>
</feature>
<feature type="helix" evidence="5">
    <location>
        <begin position="385"/>
        <end position="392"/>
    </location>
</feature>
<feature type="helix" evidence="5">
    <location>
        <begin position="399"/>
        <end position="413"/>
    </location>
</feature>
<feature type="helix" evidence="5">
    <location>
        <begin position="421"/>
        <end position="423"/>
    </location>
</feature>
<feature type="helix" evidence="5">
    <location>
        <begin position="428"/>
        <end position="440"/>
    </location>
</feature>
<feature type="strand" evidence="5">
    <location>
        <begin position="443"/>
        <end position="447"/>
    </location>
</feature>
<feature type="strand" evidence="5">
    <location>
        <begin position="449"/>
        <end position="451"/>
    </location>
</feature>
<feature type="strand" evidence="5">
    <location>
        <begin position="453"/>
        <end position="458"/>
    </location>
</feature>
<feature type="strand" evidence="5">
    <location>
        <begin position="461"/>
        <end position="466"/>
    </location>
</feature>
<feature type="turn" evidence="5">
    <location>
        <begin position="467"/>
        <end position="469"/>
    </location>
</feature>
<feature type="helix" evidence="5">
    <location>
        <begin position="477"/>
        <end position="481"/>
    </location>
</feature>
<feature type="turn" evidence="5">
    <location>
        <begin position="482"/>
        <end position="484"/>
    </location>
</feature>
<feature type="helix" evidence="5">
    <location>
        <begin position="486"/>
        <end position="494"/>
    </location>
</feature>
<feature type="turn" evidence="5">
    <location>
        <begin position="507"/>
        <end position="510"/>
    </location>
</feature>
<feature type="helix" evidence="5">
    <location>
        <begin position="511"/>
        <end position="517"/>
    </location>
</feature>
<feature type="strand" evidence="5">
    <location>
        <begin position="518"/>
        <end position="521"/>
    </location>
</feature>
<feature type="strand" evidence="5">
    <location>
        <begin position="523"/>
        <end position="527"/>
    </location>
</feature>
<feature type="strand" evidence="5">
    <location>
        <begin position="532"/>
        <end position="535"/>
    </location>
</feature>
<feature type="strand" evidence="5">
    <location>
        <begin position="537"/>
        <end position="541"/>
    </location>
</feature>
<feature type="helix" evidence="5">
    <location>
        <begin position="545"/>
        <end position="558"/>
    </location>
</feature>
<feature type="strand" evidence="5">
    <location>
        <begin position="560"/>
        <end position="566"/>
    </location>
</feature>
<feature type="strand" evidence="5">
    <location>
        <begin position="570"/>
        <end position="578"/>
    </location>
</feature>
<feature type="strand" evidence="5">
    <location>
        <begin position="581"/>
        <end position="589"/>
    </location>
</feature>
<feature type="strand" evidence="5">
    <location>
        <begin position="592"/>
        <end position="594"/>
    </location>
</feature>
<feature type="helix" evidence="5">
    <location>
        <begin position="601"/>
        <end position="608"/>
    </location>
</feature>
<feature type="strand" evidence="5">
    <location>
        <begin position="614"/>
        <end position="618"/>
    </location>
</feature>
<feature type="strand" evidence="5">
    <location>
        <begin position="621"/>
        <end position="623"/>
    </location>
</feature>
<feature type="helix" evidence="5">
    <location>
        <begin position="629"/>
        <end position="637"/>
    </location>
</feature>
<feature type="strand" evidence="5">
    <location>
        <begin position="651"/>
        <end position="654"/>
    </location>
</feature>
<feature type="turn" evidence="5">
    <location>
        <begin position="660"/>
        <end position="663"/>
    </location>
</feature>
<feature type="strand" evidence="5">
    <location>
        <begin position="665"/>
        <end position="668"/>
    </location>
</feature>
<feature type="turn" evidence="5">
    <location>
        <begin position="670"/>
        <end position="672"/>
    </location>
</feature>
<feature type="helix" evidence="5">
    <location>
        <begin position="675"/>
        <end position="687"/>
    </location>
</feature>
<feature type="strand" evidence="5">
    <location>
        <begin position="694"/>
        <end position="700"/>
    </location>
</feature>
<feature type="strand" evidence="5">
    <location>
        <begin position="702"/>
        <end position="704"/>
    </location>
</feature>
<feature type="turn" evidence="5">
    <location>
        <begin position="708"/>
        <end position="711"/>
    </location>
</feature>
<feature type="strand" evidence="5">
    <location>
        <begin position="714"/>
        <end position="721"/>
    </location>
</feature>
<feature type="helix" evidence="5">
    <location>
        <begin position="725"/>
        <end position="728"/>
    </location>
</feature>
<feature type="strand" evidence="5">
    <location>
        <begin position="731"/>
        <end position="733"/>
    </location>
</feature>
<feature type="helix" evidence="5">
    <location>
        <begin position="739"/>
        <end position="746"/>
    </location>
</feature>
<keyword id="KW-0002">3D-structure</keyword>
<keyword id="KW-0067">ATP-binding</keyword>
<keyword id="KW-0317">Glutathione biosynthesis</keyword>
<keyword id="KW-0436">Ligase</keyword>
<keyword id="KW-0460">Magnesium</keyword>
<keyword id="KW-0464">Manganese</keyword>
<keyword id="KW-0479">Metal-binding</keyword>
<keyword id="KW-0511">Multifunctional enzyme</keyword>
<keyword id="KW-0547">Nucleotide-binding</keyword>
<keyword id="KW-1185">Reference proteome</keyword>
<gene>
    <name evidence="2" type="primary">gshAB</name>
    <name evidence="2" type="synonym">gshF</name>
    <name type="ordered locus">SAG1821</name>
</gene>
<organism>
    <name type="scientific">Streptococcus agalactiae serotype V (strain ATCC BAA-611 / 2603 V/R)</name>
    <dbReference type="NCBI Taxonomy" id="208435"/>
    <lineage>
        <taxon>Bacteria</taxon>
        <taxon>Bacillati</taxon>
        <taxon>Bacillota</taxon>
        <taxon>Bacilli</taxon>
        <taxon>Lactobacillales</taxon>
        <taxon>Streptococcaceae</taxon>
        <taxon>Streptococcus</taxon>
    </lineage>
</organism>
<accession>Q8DXM9</accession>
<reference key="1">
    <citation type="journal article" date="2002" name="Proc. Natl. Acad. Sci. U.S.A.">
        <title>Complete genome sequence and comparative genomic analysis of an emerging human pathogen, serotype V Streptococcus agalactiae.</title>
        <authorList>
            <person name="Tettelin H."/>
            <person name="Masignani V."/>
            <person name="Cieslewicz M.J."/>
            <person name="Eisen J.A."/>
            <person name="Peterson S.N."/>
            <person name="Wessels M.R."/>
            <person name="Paulsen I.T."/>
            <person name="Nelson K.E."/>
            <person name="Margarit I."/>
            <person name="Read T.D."/>
            <person name="Madoff L.C."/>
            <person name="Wolf A.M."/>
            <person name="Beanan M.J."/>
            <person name="Brinkac L.M."/>
            <person name="Daugherty S.C."/>
            <person name="DeBoy R.T."/>
            <person name="Durkin A.S."/>
            <person name="Kolonay J.F."/>
            <person name="Madupu R."/>
            <person name="Lewis M.R."/>
            <person name="Radune D."/>
            <person name="Fedorova N.B."/>
            <person name="Scanlan D."/>
            <person name="Khouri H.M."/>
            <person name="Mulligan S."/>
            <person name="Carty H.A."/>
            <person name="Cline R.T."/>
            <person name="Van Aken S.E."/>
            <person name="Gill J."/>
            <person name="Scarselli M."/>
            <person name="Mora M."/>
            <person name="Iacobini E.T."/>
            <person name="Brettoni C."/>
            <person name="Galli G."/>
            <person name="Mariani M."/>
            <person name="Vegni F."/>
            <person name="Maione D."/>
            <person name="Rinaudo D."/>
            <person name="Rappuoli R."/>
            <person name="Telford J.L."/>
            <person name="Kasper D.L."/>
            <person name="Grandi G."/>
            <person name="Fraser C.M."/>
        </authorList>
    </citation>
    <scope>NUCLEOTIDE SEQUENCE [LARGE SCALE GENOMIC DNA]</scope>
    <source>
        <strain>ATCC BAA-611 / 2603 V/R</strain>
    </source>
</reference>
<reference key="2">
    <citation type="journal article" date="2005" name="J. Biol. Chem.">
        <title>Glutathione synthesis in Streptococcus agalactiae. One protein accounts for gamma-glutamylcysteine synthetase and glutathione synthetase activities.</title>
        <authorList>
            <person name="Janowiak B.E."/>
            <person name="Griffith O.W."/>
        </authorList>
    </citation>
    <scope>CHARACTERIZATION</scope>
    <source>
        <strain>ATCC BAA-611 / 2603 V/R</strain>
    </source>
</reference>
<comment type="function">
    <text>Synthesizes glutathione from L-glutamate and L-cysteine via gamma-L-glutamyl-L-cysteine.</text>
</comment>
<comment type="catalytic activity">
    <reaction evidence="2">
        <text>L-cysteine + L-glutamate + ATP = gamma-L-glutamyl-L-cysteine + ADP + phosphate + H(+)</text>
        <dbReference type="Rhea" id="RHEA:13285"/>
        <dbReference type="ChEBI" id="CHEBI:15378"/>
        <dbReference type="ChEBI" id="CHEBI:29985"/>
        <dbReference type="ChEBI" id="CHEBI:30616"/>
        <dbReference type="ChEBI" id="CHEBI:35235"/>
        <dbReference type="ChEBI" id="CHEBI:43474"/>
        <dbReference type="ChEBI" id="CHEBI:58173"/>
        <dbReference type="ChEBI" id="CHEBI:456216"/>
        <dbReference type="EC" id="6.3.2.2"/>
    </reaction>
</comment>
<comment type="catalytic activity">
    <reaction evidence="2">
        <text>gamma-L-glutamyl-L-cysteine + glycine + ATP = glutathione + ADP + phosphate + H(+)</text>
        <dbReference type="Rhea" id="RHEA:13557"/>
        <dbReference type="ChEBI" id="CHEBI:15378"/>
        <dbReference type="ChEBI" id="CHEBI:30616"/>
        <dbReference type="ChEBI" id="CHEBI:43474"/>
        <dbReference type="ChEBI" id="CHEBI:57305"/>
        <dbReference type="ChEBI" id="CHEBI:57925"/>
        <dbReference type="ChEBI" id="CHEBI:58173"/>
        <dbReference type="ChEBI" id="CHEBI:456216"/>
        <dbReference type="EC" id="6.3.2.3"/>
    </reaction>
</comment>
<comment type="cofactor">
    <cofactor evidence="1">
        <name>Mg(2+)</name>
        <dbReference type="ChEBI" id="CHEBI:18420"/>
    </cofactor>
    <cofactor evidence="1">
        <name>Mn(2+)</name>
        <dbReference type="ChEBI" id="CHEBI:29035"/>
    </cofactor>
    <text evidence="1">Binds 2 magnesium or manganese ions per subunit.</text>
</comment>
<comment type="activity regulation">
    <text>Inhibited by L-buthionine-S-sulfoximine (L-S-BSO).</text>
</comment>
<comment type="biophysicochemical properties">
    <kinetics>
        <KM>22 mM for L-glutamate</KM>
        <KM>156 uM for L-cysteine</KM>
        <KM>8.2 mM for alpha-L-aminobutyrate</KM>
        <KM>64 uM for ATP (in the reaction with gamma-GCS)</KM>
        <KM>5.9 mM for gamma-L-glutamyl-L-cysteine</KM>
        <KM>11.5 mM for gamma-L-glutamyl-L-alpha-aminobutyrate</KM>
        <KM>6.3 mM for glycine</KM>
        <KM>420 uM for ATP (in the reaction with GS)</KM>
    </kinetics>
</comment>
<comment type="pathway">
    <text evidence="2">Sulfur metabolism; glutathione biosynthesis; glutathione from L-cysteine and L-glutamate: step 1/2.</text>
</comment>
<comment type="pathway">
    <text evidence="2">Sulfur metabolism; glutathione biosynthesis; glutathione from L-cysteine and L-glutamate: step 2/2.</text>
</comment>
<comment type="subunit">
    <text evidence="4">Monomer.</text>
</comment>
<comment type="similarity">
    <text evidence="2">In the N-terminal section; belongs to the glutamate--cysteine ligase type 1 family. Type 2 subfamily.</text>
</comment>
<sequence length="750" mass="85603">MIIDRLLQRSHSHLPILQATFGLERESLRIHQPTQRVAQTPHPKTLGSRNYHPYIQTDYSEPQLELITPIAKDSQEAIRFLKAISDVAGRSINHDEYLWPLSMPPKVREEDIQIAQLEDAFEYDYRKYLEKTYGKLIQSISGIHYNLGLGQELLTSLFELSQADNAIDFQNQLYMKLSQNFLRYRWLLTYLYGASPVAEEDFLDQKLNNPVRSLRNSHLGYVNHKDIRISYTSLKDYVNDLENAVKSGQLIAEKEFYSPVRLRGSKACRNYLEKGITYLEFRTFDLNPFSPIGITQETVDTVHLFLLALLWIDSSSHIDQDIKEANRLNDLIALSHPLEKLPNQAPVSDLVDAMQSVIQHFNLSPYYQDLLESVKRQIQSPELTVAGQLLEMIEGLSLETFGQRQGQIYHDYAWEAPYALKGYETMELSTQLLLFDVIQKGVNFEVLDEQDQFLKLWHNSHIEYVKNGNMTSKDNYIVPLAMANKVVTKKILDEKHFPTPFGDEFTDRKEALNYFSQIQDKPIVVKPKSTNFGLGISIFKTSANLASYEKAIDIAFTEDSAILVEEYIEGTEYRFFVLEGDCIAVLLRVAANVVGDGIHTISQLVKLKNQNPLRGYDHRSPLEVIELGEVEQLMLEQQGYTVNSIPPEGTKIELRRNSNISTGGDSIDVTNTMDPTYKQLAAEMAEAMGAWVCGVDLIIPNATQAYSKDKKNATCIELNFNPLMYMHTYCQEGPGQSITPRILAKLFPEL</sequence>